<feature type="chain" id="PRO_0000314250" description="Mediator of RNA polymerase II transcription subunit 13">
    <location>
        <begin position="1"/>
        <end position="1375"/>
    </location>
</feature>
<feature type="region of interest" description="Disordered" evidence="3">
    <location>
        <begin position="1"/>
        <end position="51"/>
    </location>
</feature>
<feature type="region of interest" description="Disordered" evidence="3">
    <location>
        <begin position="313"/>
        <end position="333"/>
    </location>
</feature>
<feature type="region of interest" description="Disordered" evidence="3">
    <location>
        <begin position="350"/>
        <end position="370"/>
    </location>
</feature>
<feature type="region of interest" description="Disordered" evidence="3">
    <location>
        <begin position="397"/>
        <end position="417"/>
    </location>
</feature>
<feature type="region of interest" description="Disordered" evidence="3">
    <location>
        <begin position="537"/>
        <end position="581"/>
    </location>
</feature>
<feature type="region of interest" description="Disordered" evidence="3">
    <location>
        <begin position="660"/>
        <end position="689"/>
    </location>
</feature>
<feature type="region of interest" description="Disordered" evidence="3">
    <location>
        <begin position="841"/>
        <end position="862"/>
    </location>
</feature>
<feature type="region of interest" description="Disordered" evidence="3">
    <location>
        <begin position="1233"/>
        <end position="1285"/>
    </location>
</feature>
<feature type="coiled-coil region" evidence="2">
    <location>
        <begin position="182"/>
        <end position="216"/>
    </location>
</feature>
<feature type="coiled-coil region" evidence="2">
    <location>
        <begin position="297"/>
        <end position="324"/>
    </location>
</feature>
<feature type="compositionally biased region" description="Polar residues" evidence="3">
    <location>
        <begin position="22"/>
        <end position="51"/>
    </location>
</feature>
<feature type="compositionally biased region" description="Basic and acidic residues" evidence="3">
    <location>
        <begin position="313"/>
        <end position="324"/>
    </location>
</feature>
<feature type="compositionally biased region" description="Polar residues" evidence="3">
    <location>
        <begin position="397"/>
        <end position="411"/>
    </location>
</feature>
<feature type="compositionally biased region" description="Acidic residues" evidence="3">
    <location>
        <begin position="666"/>
        <end position="685"/>
    </location>
</feature>
<feature type="compositionally biased region" description="Polar residues" evidence="3">
    <location>
        <begin position="1233"/>
        <end position="1259"/>
    </location>
</feature>
<name>SSN2_PHANO</name>
<dbReference type="EMBL" id="CH445346">
    <property type="protein sequence ID" value="EAT80309.2"/>
    <property type="molecule type" value="Genomic_DNA"/>
</dbReference>
<dbReference type="RefSeq" id="XP_001802717.1">
    <property type="nucleotide sequence ID" value="XM_001802665.1"/>
</dbReference>
<dbReference type="STRING" id="321614.Q0U6W8"/>
<dbReference type="EnsemblFungi" id="SNOT_12496">
    <property type="protein sequence ID" value="SNOT_12496"/>
    <property type="gene ID" value="SNOG_12496"/>
</dbReference>
<dbReference type="GeneID" id="5979626"/>
<dbReference type="KEGG" id="pno:SNOG_12496"/>
<dbReference type="VEuPathDB" id="FungiDB:JI435_124960"/>
<dbReference type="eggNOG" id="KOG3600">
    <property type="taxonomic scope" value="Eukaryota"/>
</dbReference>
<dbReference type="HOGENOM" id="CLU_002210_0_0_1"/>
<dbReference type="InParanoid" id="Q0U6W8"/>
<dbReference type="Proteomes" id="UP000001055">
    <property type="component" value="Unassembled WGS sequence"/>
</dbReference>
<dbReference type="GO" id="GO:0016592">
    <property type="term" value="C:mediator complex"/>
    <property type="evidence" value="ECO:0000318"/>
    <property type="project" value="GO_Central"/>
</dbReference>
<dbReference type="GO" id="GO:0003713">
    <property type="term" value="F:transcription coactivator activity"/>
    <property type="evidence" value="ECO:0000318"/>
    <property type="project" value="GO_Central"/>
</dbReference>
<dbReference type="GO" id="GO:0045944">
    <property type="term" value="P:positive regulation of transcription by RNA polymerase II"/>
    <property type="evidence" value="ECO:0000318"/>
    <property type="project" value="GO_Central"/>
</dbReference>
<dbReference type="InterPro" id="IPR009401">
    <property type="entry name" value="Med13_C"/>
</dbReference>
<dbReference type="InterPro" id="IPR051139">
    <property type="entry name" value="Mediator_complx_sub13"/>
</dbReference>
<dbReference type="InterPro" id="IPR021643">
    <property type="entry name" value="Mediator_Med13_N"/>
</dbReference>
<dbReference type="InterPro" id="IPR041285">
    <property type="entry name" value="MID_MedPIWI"/>
</dbReference>
<dbReference type="PANTHER" id="PTHR48249">
    <property type="entry name" value="MEDIATOR OF RNA POLYMERASE II TRANSCRIPTION SUBUNIT 13"/>
    <property type="match status" value="1"/>
</dbReference>
<dbReference type="PANTHER" id="PTHR48249:SF3">
    <property type="entry name" value="MEDIATOR OF RNA POLYMERASE II TRANSCRIPTION SUBUNIT 13"/>
    <property type="match status" value="1"/>
</dbReference>
<dbReference type="Pfam" id="PF06333">
    <property type="entry name" value="Med13_C"/>
    <property type="match status" value="1"/>
</dbReference>
<dbReference type="Pfam" id="PF11597">
    <property type="entry name" value="Med13_N"/>
    <property type="match status" value="1"/>
</dbReference>
<dbReference type="Pfam" id="PF18296">
    <property type="entry name" value="MID_MedPIWI"/>
    <property type="match status" value="1"/>
</dbReference>
<evidence type="ECO:0000250" key="1"/>
<evidence type="ECO:0000255" key="2"/>
<evidence type="ECO:0000256" key="3">
    <source>
        <dbReference type="SAM" id="MobiDB-lite"/>
    </source>
</evidence>
<evidence type="ECO:0000305" key="4"/>
<keyword id="KW-0010">Activator</keyword>
<keyword id="KW-0175">Coiled coil</keyword>
<keyword id="KW-0539">Nucleus</keyword>
<keyword id="KW-0678">Repressor</keyword>
<keyword id="KW-0804">Transcription</keyword>
<keyword id="KW-0805">Transcription regulation</keyword>
<protein>
    <recommendedName>
        <fullName>Mediator of RNA polymerase II transcription subunit 13</fullName>
    </recommendedName>
    <alternativeName>
        <fullName>Mediator complex subunit 13</fullName>
    </alternativeName>
</protein>
<comment type="function">
    <text evidence="1">Component of the SRB8-11 complex. The SRB8-11 complex is a regulatory module of the Mediator complex which is itself involved in regulation of basal and activated RNA polymerase II-dependent transcription. The SRB8-11 complex may be involved in the transcriptional repression of a subset of genes regulated by Mediator. It may inhibit the association of the Mediator complex with RNA polymerase II to form the holoenzyme complex (By similarity).</text>
</comment>
<comment type="subunit">
    <text evidence="1">Component of the SRB8-11 complex, which itself associates with the Mediator complex.</text>
</comment>
<comment type="subcellular location">
    <subcellularLocation>
        <location evidence="4">Nucleus</location>
    </subcellularLocation>
</comment>
<comment type="similarity">
    <text evidence="4">Belongs to the Mediator complex subunit 13 family.</text>
</comment>
<proteinExistence type="inferred from homology"/>
<reference key="1">
    <citation type="journal article" date="2007" name="Plant Cell">
        <title>Dothideomycete-plant interactions illuminated by genome sequencing and EST analysis of the wheat pathogen Stagonospora nodorum.</title>
        <authorList>
            <person name="Hane J.K."/>
            <person name="Lowe R.G.T."/>
            <person name="Solomon P.S."/>
            <person name="Tan K.-C."/>
            <person name="Schoch C.L."/>
            <person name="Spatafora J.W."/>
            <person name="Crous P.W."/>
            <person name="Kodira C.D."/>
            <person name="Birren B.W."/>
            <person name="Galagan J.E."/>
            <person name="Torriani S.F.F."/>
            <person name="McDonald B.A."/>
            <person name="Oliver R.P."/>
        </authorList>
    </citation>
    <scope>NUCLEOTIDE SEQUENCE [LARGE SCALE GENOMIC DNA]</scope>
    <source>
        <strain>SN15 / ATCC MYA-4574 / FGSC 10173</strain>
    </source>
</reference>
<sequence length="1375" mass="150059">MKASEMARPPMRPGNPHAFASPATTPSRTASPNNAQGANVRTTQGGNQAGASEQQQPLDCFVVYELFASAVTALVSFFLVKDCGAVALNYRTFVSKVEPQQEEGKIVTDLDRLYWLTSVHVHWFSSGTLLVSTSTERTLALQCLGDLSEDEQQKLVDRCIRVAPNAMLASISSFDDPRQLSADDSNRRTSKKKAKMDSLEQNIEKWRMSVQRWLSRRGYSLPNLDKNSAWVTIRVGQLAQFPAMSPHLPTSARDVLWPRSLCFMQSLVPDDLKWFEVPGSAGFRDPIDAAQDWFTGQLERDKILDMQRKAKKAEEDAMRRKDEAPGLYPSSPFTARTGVYGDLQPVSGVYPTPPDGIVPGTGISSTDTPSVSGTASNVVLVPGGNTPAINLSAPQDYTTTDNQQHASTSPTFPAPLEPFQTSGEDDDLFEDMEGDGFGGPDVEEADFDFFDGPDGDDVNMADAPALPETTNKPHKQLNNDVAMAHEEEHSVKEEMSDPLAALESALAAPYRPINDGMPEEKVSEKEAKAVVPVEALATSPAQIKQNPPAKKEATPPLSPSAIAKTLQPSPPKKQSSFPASLQRTNSAFHSLDFSRRLSLVDAKYQDGRFAARIEKTEDDESAVNPGRLKSLKDLPLLNKLRYAVASASTAKSTEALSLARAVSDDSASDSESETSDMSEGSPEDPVDTHPLPYLGRLIIPAKRKLPTEGHGTPLSVTSFAESLAGDWQDSNSLLLDESSLTFFEPNTWDWSIPDLSMEPPEEKPLNGKESIAVTQILTDQIVSATLDLLDENALVESTSSIEPSSETRWQICIKELFPKAAECTLSALIAIHDVFPDLSAQAKGQQRPPPRKPNESNAIPSNHMYPMNPPFIRVRRAETHWDLLPPSIAFWEPLGLAPASPPKNVVAFCIYPHSASLRPILDRFMLNLQLAYDTCKLGSHARVETVIEYEGGLVPVKANSQTSAKEAFRALKDTCIQLGKLLAIQYAQLGEQQDTKIDAFVVYMVDPFGNPAALWELCSAFWSLFQAYGQGPPGRSDPTPKPDLVLQIIPIKYLASFDVPVILDAATYVSLAREVYDRCPPSVASTDKTPLSIYKAPAFQLEESLPRNVQFKLLSEPPQDLLRENSYMHIAYAISLDGNWLTAAWSDSCGKSQAVVSYHLGTRVFGDIAKEIWQTTIEILQARRVQWRVCIAKSGPLDREELETWVLLITCPTQVNLFLTILTVIEDPPYKFTPTTPAPSNSSAQANTNTPGSTPQTGVSPDPTIGLTPAATPSADPAPDPAADPEARLIDVTDETWGIILAHRLHNSNSTNQFSPALISGLLVKRGITHATSNSIHHPIPDPLPGPITVAVNILWIGAVGSTWKRAAESRGTQY</sequence>
<gene>
    <name type="primary">SSN2</name>
    <name type="synonym">MED13</name>
    <name type="ORF">SNOG_12496</name>
</gene>
<organism>
    <name type="scientific">Phaeosphaeria nodorum (strain SN15 / ATCC MYA-4574 / FGSC 10173)</name>
    <name type="common">Glume blotch fungus</name>
    <name type="synonym">Parastagonospora nodorum</name>
    <dbReference type="NCBI Taxonomy" id="321614"/>
    <lineage>
        <taxon>Eukaryota</taxon>
        <taxon>Fungi</taxon>
        <taxon>Dikarya</taxon>
        <taxon>Ascomycota</taxon>
        <taxon>Pezizomycotina</taxon>
        <taxon>Dothideomycetes</taxon>
        <taxon>Pleosporomycetidae</taxon>
        <taxon>Pleosporales</taxon>
        <taxon>Pleosporineae</taxon>
        <taxon>Phaeosphaeriaceae</taxon>
        <taxon>Parastagonospora</taxon>
    </lineage>
</organism>
<accession>Q0U6W8</accession>